<dbReference type="EC" id="2.1.1.186" evidence="1"/>
<dbReference type="EMBL" id="CP000544">
    <property type="protein sequence ID" value="ABM62425.1"/>
    <property type="molecule type" value="Genomic_DNA"/>
</dbReference>
<dbReference type="RefSeq" id="WP_041595126.1">
    <property type="nucleotide sequence ID" value="NC_008789.1"/>
</dbReference>
<dbReference type="SMR" id="A1WXL3"/>
<dbReference type="STRING" id="349124.Hhal_1661"/>
<dbReference type="KEGG" id="hha:Hhal_1661"/>
<dbReference type="eggNOG" id="COG2933">
    <property type="taxonomic scope" value="Bacteria"/>
</dbReference>
<dbReference type="HOGENOM" id="CLU_043780_0_0_6"/>
<dbReference type="OrthoDB" id="154490at2"/>
<dbReference type="Proteomes" id="UP000000647">
    <property type="component" value="Chromosome"/>
</dbReference>
<dbReference type="GO" id="GO:0005737">
    <property type="term" value="C:cytoplasm"/>
    <property type="evidence" value="ECO:0007669"/>
    <property type="project" value="UniProtKB-SubCell"/>
</dbReference>
<dbReference type="GO" id="GO:0008757">
    <property type="term" value="F:S-adenosylmethionine-dependent methyltransferase activity"/>
    <property type="evidence" value="ECO:0007669"/>
    <property type="project" value="UniProtKB-UniRule"/>
</dbReference>
<dbReference type="GO" id="GO:0032259">
    <property type="term" value="P:methylation"/>
    <property type="evidence" value="ECO:0007669"/>
    <property type="project" value="UniProtKB-KW"/>
</dbReference>
<dbReference type="GO" id="GO:0006364">
    <property type="term" value="P:rRNA processing"/>
    <property type="evidence" value="ECO:0007669"/>
    <property type="project" value="UniProtKB-UniRule"/>
</dbReference>
<dbReference type="Gene3D" id="3.30.2300.20">
    <property type="match status" value="1"/>
</dbReference>
<dbReference type="Gene3D" id="3.30.70.2810">
    <property type="match status" value="1"/>
</dbReference>
<dbReference type="Gene3D" id="3.40.50.150">
    <property type="entry name" value="Vaccinia Virus protein VP39"/>
    <property type="match status" value="1"/>
</dbReference>
<dbReference type="HAMAP" id="MF_01551">
    <property type="entry name" value="23SrRNA_methyltr_M"/>
    <property type="match status" value="1"/>
</dbReference>
<dbReference type="InterPro" id="IPR040739">
    <property type="entry name" value="RlmM_FDX"/>
</dbReference>
<dbReference type="InterPro" id="IPR048646">
    <property type="entry name" value="RlmM_THUMP-like"/>
</dbReference>
<dbReference type="InterPro" id="IPR002877">
    <property type="entry name" value="RNA_MeTrfase_FtsJ_dom"/>
</dbReference>
<dbReference type="InterPro" id="IPR011224">
    <property type="entry name" value="rRNA_MeTrfase_M"/>
</dbReference>
<dbReference type="InterPro" id="IPR029063">
    <property type="entry name" value="SAM-dependent_MTases_sf"/>
</dbReference>
<dbReference type="NCBIfam" id="NF008734">
    <property type="entry name" value="PRK11760.1"/>
    <property type="match status" value="1"/>
</dbReference>
<dbReference type="PANTHER" id="PTHR37524">
    <property type="entry name" value="RIBOSOMAL RNA LARGE SUBUNIT METHYLTRANSFERASE M"/>
    <property type="match status" value="1"/>
</dbReference>
<dbReference type="PANTHER" id="PTHR37524:SF2">
    <property type="entry name" value="RIBOSOMAL RNA METHYLTRANSFERASE FTSJ DOMAIN-CONTAINING PROTEIN"/>
    <property type="match status" value="1"/>
</dbReference>
<dbReference type="Pfam" id="PF01728">
    <property type="entry name" value="FtsJ"/>
    <property type="match status" value="1"/>
</dbReference>
<dbReference type="Pfam" id="PF18125">
    <property type="entry name" value="RlmM_FDX"/>
    <property type="match status" value="1"/>
</dbReference>
<dbReference type="Pfam" id="PF21239">
    <property type="entry name" value="RLMM_N"/>
    <property type="match status" value="1"/>
</dbReference>
<dbReference type="PIRSF" id="PIRSF028774">
    <property type="entry name" value="UCP028774"/>
    <property type="match status" value="1"/>
</dbReference>
<dbReference type="SUPFAM" id="SSF53335">
    <property type="entry name" value="S-adenosyl-L-methionine-dependent methyltransferases"/>
    <property type="match status" value="1"/>
</dbReference>
<sequence>MELQGWILHCRAGYEQTLASEATMAAHERDVHGYCRARAQSAYVVFHAPAGDAPLPPQLVFARAGAGLIGELQGLPEGGRAEAIAAALPPAVGSATPWVEHPDSDAGRPLARFCRRFTGPLRHALTQTGVTSGDPQRRLRLLFPDSRHCFAGIGPREGWPSGIPRLRMPRNAPSRSVLKLEEALHRLVPENERPYPGEHAVDLGAAPGGWTWLLRERGLTVTAIDNGPLAPALADDPGVEHQRTDAFRFRPRTEVDWLVCDVVDRPQGIARLMTQWLREEWARAAIFNLKLPMRRPLETVRQALDAVRTTGARAHAAQLYHDREEITVYARRMASRNRP</sequence>
<name>RLMM_HALHL</name>
<protein>
    <recommendedName>
        <fullName evidence="1">Ribosomal RNA large subunit methyltransferase M</fullName>
        <ecNumber evidence="1">2.1.1.186</ecNumber>
    </recommendedName>
    <alternativeName>
        <fullName evidence="1">23S rRNA (cytidine2498-2'-O)-methyltransferase</fullName>
    </alternativeName>
    <alternativeName>
        <fullName evidence="1">23S rRNA 2'-O-ribose methyltransferase RlmM</fullName>
    </alternativeName>
</protein>
<feature type="chain" id="PRO_0000314520" description="Ribosomal RNA large subunit methyltransferase M">
    <location>
        <begin position="1"/>
        <end position="339"/>
    </location>
</feature>
<feature type="active site" description="Proton acceptor" evidence="1">
    <location>
        <position position="290"/>
    </location>
</feature>
<feature type="binding site" evidence="1">
    <location>
        <position position="176"/>
    </location>
    <ligand>
        <name>S-adenosyl-L-methionine</name>
        <dbReference type="ChEBI" id="CHEBI:59789"/>
    </ligand>
</feature>
<feature type="binding site" evidence="1">
    <location>
        <begin position="206"/>
        <end position="209"/>
    </location>
    <ligand>
        <name>S-adenosyl-L-methionine</name>
        <dbReference type="ChEBI" id="CHEBI:59789"/>
    </ligand>
</feature>
<feature type="binding site" evidence="1">
    <location>
        <position position="225"/>
    </location>
    <ligand>
        <name>S-adenosyl-L-methionine</name>
        <dbReference type="ChEBI" id="CHEBI:59789"/>
    </ligand>
</feature>
<feature type="binding site" evidence="1">
    <location>
        <position position="245"/>
    </location>
    <ligand>
        <name>S-adenosyl-L-methionine</name>
        <dbReference type="ChEBI" id="CHEBI:59789"/>
    </ligand>
</feature>
<feature type="binding site" evidence="1">
    <location>
        <position position="261"/>
    </location>
    <ligand>
        <name>S-adenosyl-L-methionine</name>
        <dbReference type="ChEBI" id="CHEBI:59789"/>
    </ligand>
</feature>
<reference key="1">
    <citation type="submission" date="2006-12" db="EMBL/GenBank/DDBJ databases">
        <title>Complete sequence of Halorhodospira halophila SL1.</title>
        <authorList>
            <consortium name="US DOE Joint Genome Institute"/>
            <person name="Copeland A."/>
            <person name="Lucas S."/>
            <person name="Lapidus A."/>
            <person name="Barry K."/>
            <person name="Detter J.C."/>
            <person name="Glavina del Rio T."/>
            <person name="Hammon N."/>
            <person name="Israni S."/>
            <person name="Dalin E."/>
            <person name="Tice H."/>
            <person name="Pitluck S."/>
            <person name="Saunders E."/>
            <person name="Brettin T."/>
            <person name="Bruce D."/>
            <person name="Han C."/>
            <person name="Tapia R."/>
            <person name="Schmutz J."/>
            <person name="Larimer F."/>
            <person name="Land M."/>
            <person name="Hauser L."/>
            <person name="Kyrpides N."/>
            <person name="Mikhailova N."/>
            <person name="Hoff W."/>
            <person name="Richardson P."/>
        </authorList>
    </citation>
    <scope>NUCLEOTIDE SEQUENCE [LARGE SCALE GENOMIC DNA]</scope>
    <source>
        <strain>DSM 244 / SL1</strain>
    </source>
</reference>
<evidence type="ECO:0000255" key="1">
    <source>
        <dbReference type="HAMAP-Rule" id="MF_01551"/>
    </source>
</evidence>
<accession>A1WXL3</accession>
<organism>
    <name type="scientific">Halorhodospira halophila (strain DSM 244 / SL1)</name>
    <name type="common">Ectothiorhodospira halophila (strain DSM 244 / SL1)</name>
    <dbReference type="NCBI Taxonomy" id="349124"/>
    <lineage>
        <taxon>Bacteria</taxon>
        <taxon>Pseudomonadati</taxon>
        <taxon>Pseudomonadota</taxon>
        <taxon>Gammaproteobacteria</taxon>
        <taxon>Chromatiales</taxon>
        <taxon>Ectothiorhodospiraceae</taxon>
        <taxon>Halorhodospira</taxon>
    </lineage>
</organism>
<proteinExistence type="inferred from homology"/>
<gene>
    <name evidence="1" type="primary">rlmM</name>
    <name type="ordered locus">Hhal_1661</name>
</gene>
<comment type="function">
    <text evidence="1">Catalyzes the 2'-O-methylation at nucleotide C2498 in 23S rRNA.</text>
</comment>
<comment type="catalytic activity">
    <reaction evidence="1">
        <text>cytidine(2498) in 23S rRNA + S-adenosyl-L-methionine = 2'-O-methylcytidine(2498) in 23S rRNA + S-adenosyl-L-homocysteine + H(+)</text>
        <dbReference type="Rhea" id="RHEA:42788"/>
        <dbReference type="Rhea" id="RHEA-COMP:10244"/>
        <dbReference type="Rhea" id="RHEA-COMP:10245"/>
        <dbReference type="ChEBI" id="CHEBI:15378"/>
        <dbReference type="ChEBI" id="CHEBI:57856"/>
        <dbReference type="ChEBI" id="CHEBI:59789"/>
        <dbReference type="ChEBI" id="CHEBI:74495"/>
        <dbReference type="ChEBI" id="CHEBI:82748"/>
        <dbReference type="EC" id="2.1.1.186"/>
    </reaction>
</comment>
<comment type="subunit">
    <text evidence="1">Monomer.</text>
</comment>
<comment type="subcellular location">
    <subcellularLocation>
        <location evidence="1">Cytoplasm</location>
    </subcellularLocation>
</comment>
<comment type="similarity">
    <text evidence="1">Belongs to the class I-like SAM-binding methyltransferase superfamily. RNA methyltransferase RlmE family. RlmM subfamily.</text>
</comment>
<keyword id="KW-0963">Cytoplasm</keyword>
<keyword id="KW-0489">Methyltransferase</keyword>
<keyword id="KW-1185">Reference proteome</keyword>
<keyword id="KW-0698">rRNA processing</keyword>
<keyword id="KW-0949">S-adenosyl-L-methionine</keyword>
<keyword id="KW-0808">Transferase</keyword>